<organism>
    <name type="scientific">Shewanella sp. (strain W3-18-1)</name>
    <dbReference type="NCBI Taxonomy" id="351745"/>
    <lineage>
        <taxon>Bacteria</taxon>
        <taxon>Pseudomonadati</taxon>
        <taxon>Pseudomonadota</taxon>
        <taxon>Gammaproteobacteria</taxon>
        <taxon>Alteromonadales</taxon>
        <taxon>Shewanellaceae</taxon>
        <taxon>Shewanella</taxon>
    </lineage>
</organism>
<feature type="chain" id="PRO_1000074276" description="tRNA sulfurtransferase">
    <location>
        <begin position="1"/>
        <end position="484"/>
    </location>
</feature>
<feature type="domain" description="THUMP" evidence="1">
    <location>
        <begin position="63"/>
        <end position="167"/>
    </location>
</feature>
<feature type="domain" description="Rhodanese" evidence="1">
    <location>
        <begin position="406"/>
        <end position="484"/>
    </location>
</feature>
<feature type="active site" description="Cysteine persulfide intermediate" evidence="1">
    <location>
        <position position="458"/>
    </location>
</feature>
<feature type="binding site" evidence="1">
    <location>
        <begin position="185"/>
        <end position="186"/>
    </location>
    <ligand>
        <name>ATP</name>
        <dbReference type="ChEBI" id="CHEBI:30616"/>
    </ligand>
</feature>
<feature type="binding site" evidence="1">
    <location>
        <position position="267"/>
    </location>
    <ligand>
        <name>ATP</name>
        <dbReference type="ChEBI" id="CHEBI:30616"/>
    </ligand>
</feature>
<feature type="binding site" evidence="1">
    <location>
        <position position="289"/>
    </location>
    <ligand>
        <name>ATP</name>
        <dbReference type="ChEBI" id="CHEBI:30616"/>
    </ligand>
</feature>
<feature type="binding site" evidence="1">
    <location>
        <position position="298"/>
    </location>
    <ligand>
        <name>ATP</name>
        <dbReference type="ChEBI" id="CHEBI:30616"/>
    </ligand>
</feature>
<feature type="disulfide bond" description="Redox-active" evidence="1">
    <location>
        <begin position="346"/>
        <end position="458"/>
    </location>
</feature>
<dbReference type="EC" id="2.8.1.4" evidence="1"/>
<dbReference type="EMBL" id="CP000503">
    <property type="protein sequence ID" value="ABM25643.1"/>
    <property type="molecule type" value="Genomic_DNA"/>
</dbReference>
<dbReference type="RefSeq" id="WP_011790098.1">
    <property type="nucleotide sequence ID" value="NC_008750.1"/>
</dbReference>
<dbReference type="SMR" id="A1RLU8"/>
<dbReference type="GeneID" id="67442800"/>
<dbReference type="KEGG" id="shw:Sputw3181_2826"/>
<dbReference type="HOGENOM" id="CLU_037952_4_1_6"/>
<dbReference type="UniPathway" id="UPA00060"/>
<dbReference type="Proteomes" id="UP000002597">
    <property type="component" value="Chromosome"/>
</dbReference>
<dbReference type="GO" id="GO:0005829">
    <property type="term" value="C:cytosol"/>
    <property type="evidence" value="ECO:0007669"/>
    <property type="project" value="TreeGrafter"/>
</dbReference>
<dbReference type="GO" id="GO:0005524">
    <property type="term" value="F:ATP binding"/>
    <property type="evidence" value="ECO:0007669"/>
    <property type="project" value="UniProtKB-UniRule"/>
</dbReference>
<dbReference type="GO" id="GO:0004810">
    <property type="term" value="F:CCA tRNA nucleotidyltransferase activity"/>
    <property type="evidence" value="ECO:0007669"/>
    <property type="project" value="InterPro"/>
</dbReference>
<dbReference type="GO" id="GO:0000049">
    <property type="term" value="F:tRNA binding"/>
    <property type="evidence" value="ECO:0007669"/>
    <property type="project" value="UniProtKB-UniRule"/>
</dbReference>
<dbReference type="GO" id="GO:0140741">
    <property type="term" value="F:tRNA-uracil-4 sulfurtransferase activity"/>
    <property type="evidence" value="ECO:0007669"/>
    <property type="project" value="UniProtKB-EC"/>
</dbReference>
<dbReference type="GO" id="GO:0009228">
    <property type="term" value="P:thiamine biosynthetic process"/>
    <property type="evidence" value="ECO:0007669"/>
    <property type="project" value="UniProtKB-KW"/>
</dbReference>
<dbReference type="GO" id="GO:0009229">
    <property type="term" value="P:thiamine diphosphate biosynthetic process"/>
    <property type="evidence" value="ECO:0007669"/>
    <property type="project" value="UniProtKB-UniRule"/>
</dbReference>
<dbReference type="GO" id="GO:0052837">
    <property type="term" value="P:thiazole biosynthetic process"/>
    <property type="evidence" value="ECO:0007669"/>
    <property type="project" value="InterPro"/>
</dbReference>
<dbReference type="GO" id="GO:0002937">
    <property type="term" value="P:tRNA 4-thiouridine biosynthesis"/>
    <property type="evidence" value="ECO:0007669"/>
    <property type="project" value="TreeGrafter"/>
</dbReference>
<dbReference type="CDD" id="cd01712">
    <property type="entry name" value="PPase_ThiI"/>
    <property type="match status" value="1"/>
</dbReference>
<dbReference type="CDD" id="cd00158">
    <property type="entry name" value="RHOD"/>
    <property type="match status" value="1"/>
</dbReference>
<dbReference type="CDD" id="cd11716">
    <property type="entry name" value="THUMP_ThiI"/>
    <property type="match status" value="1"/>
</dbReference>
<dbReference type="FunFam" id="3.30.2130.30:FF:000002">
    <property type="entry name" value="tRNA sulfurtransferase"/>
    <property type="match status" value="1"/>
</dbReference>
<dbReference type="FunFam" id="3.40.250.10:FF:000003">
    <property type="entry name" value="tRNA sulfurtransferase"/>
    <property type="match status" value="1"/>
</dbReference>
<dbReference type="FunFam" id="3.40.50.620:FF:000029">
    <property type="entry name" value="tRNA sulfurtransferase"/>
    <property type="match status" value="1"/>
</dbReference>
<dbReference type="Gene3D" id="3.30.2130.30">
    <property type="match status" value="1"/>
</dbReference>
<dbReference type="Gene3D" id="3.40.50.620">
    <property type="entry name" value="HUPs"/>
    <property type="match status" value="1"/>
</dbReference>
<dbReference type="Gene3D" id="3.40.250.10">
    <property type="entry name" value="Rhodanese-like domain"/>
    <property type="match status" value="1"/>
</dbReference>
<dbReference type="HAMAP" id="MF_00021">
    <property type="entry name" value="ThiI"/>
    <property type="match status" value="1"/>
</dbReference>
<dbReference type="InterPro" id="IPR001763">
    <property type="entry name" value="Rhodanese-like_dom"/>
</dbReference>
<dbReference type="InterPro" id="IPR036873">
    <property type="entry name" value="Rhodanese-like_dom_sf"/>
</dbReference>
<dbReference type="InterPro" id="IPR014729">
    <property type="entry name" value="Rossmann-like_a/b/a_fold"/>
</dbReference>
<dbReference type="InterPro" id="IPR020536">
    <property type="entry name" value="ThiI_AANH"/>
</dbReference>
<dbReference type="InterPro" id="IPR054173">
    <property type="entry name" value="ThiI_fer"/>
</dbReference>
<dbReference type="InterPro" id="IPR049961">
    <property type="entry name" value="ThiI_N"/>
</dbReference>
<dbReference type="InterPro" id="IPR026340">
    <property type="entry name" value="THII_Thiazole_biosynth_dom"/>
</dbReference>
<dbReference type="InterPro" id="IPR004114">
    <property type="entry name" value="THUMP_dom"/>
</dbReference>
<dbReference type="InterPro" id="IPR049962">
    <property type="entry name" value="THUMP_ThiI"/>
</dbReference>
<dbReference type="InterPro" id="IPR003720">
    <property type="entry name" value="tRNA_STrfase"/>
</dbReference>
<dbReference type="InterPro" id="IPR050102">
    <property type="entry name" value="tRNA_sulfurtransferase_ThiI"/>
</dbReference>
<dbReference type="NCBIfam" id="TIGR04271">
    <property type="entry name" value="ThiI_C_thiazole"/>
    <property type="match status" value="1"/>
</dbReference>
<dbReference type="NCBIfam" id="TIGR00342">
    <property type="entry name" value="tRNA uracil 4-sulfurtransferase ThiI"/>
    <property type="match status" value="1"/>
</dbReference>
<dbReference type="PANTHER" id="PTHR43209">
    <property type="entry name" value="TRNA SULFURTRANSFERASE"/>
    <property type="match status" value="1"/>
</dbReference>
<dbReference type="PANTHER" id="PTHR43209:SF1">
    <property type="entry name" value="TRNA SULFURTRANSFERASE"/>
    <property type="match status" value="1"/>
</dbReference>
<dbReference type="Pfam" id="PF00581">
    <property type="entry name" value="Rhodanese"/>
    <property type="match status" value="1"/>
</dbReference>
<dbReference type="Pfam" id="PF02568">
    <property type="entry name" value="ThiI"/>
    <property type="match status" value="1"/>
</dbReference>
<dbReference type="Pfam" id="PF22025">
    <property type="entry name" value="ThiI_fer"/>
    <property type="match status" value="1"/>
</dbReference>
<dbReference type="Pfam" id="PF02926">
    <property type="entry name" value="THUMP"/>
    <property type="match status" value="1"/>
</dbReference>
<dbReference type="SMART" id="SM00981">
    <property type="entry name" value="THUMP"/>
    <property type="match status" value="1"/>
</dbReference>
<dbReference type="SUPFAM" id="SSF52402">
    <property type="entry name" value="Adenine nucleotide alpha hydrolases-like"/>
    <property type="match status" value="1"/>
</dbReference>
<dbReference type="SUPFAM" id="SSF52821">
    <property type="entry name" value="Rhodanese/Cell cycle control phosphatase"/>
    <property type="match status" value="1"/>
</dbReference>
<dbReference type="SUPFAM" id="SSF143437">
    <property type="entry name" value="THUMP domain-like"/>
    <property type="match status" value="1"/>
</dbReference>
<dbReference type="PROSITE" id="PS50206">
    <property type="entry name" value="RHODANESE_3"/>
    <property type="match status" value="1"/>
</dbReference>
<dbReference type="PROSITE" id="PS51165">
    <property type="entry name" value="THUMP"/>
    <property type="match status" value="1"/>
</dbReference>
<keyword id="KW-0067">ATP-binding</keyword>
<keyword id="KW-0963">Cytoplasm</keyword>
<keyword id="KW-1015">Disulfide bond</keyword>
<keyword id="KW-0547">Nucleotide-binding</keyword>
<keyword id="KW-0676">Redox-active center</keyword>
<keyword id="KW-0694">RNA-binding</keyword>
<keyword id="KW-0784">Thiamine biosynthesis</keyword>
<keyword id="KW-0808">Transferase</keyword>
<keyword id="KW-0820">tRNA-binding</keyword>
<comment type="function">
    <text evidence="1">Catalyzes the ATP-dependent transfer of a sulfur to tRNA to produce 4-thiouridine in position 8 of tRNAs, which functions as a near-UV photosensor. Also catalyzes the transfer of sulfur to the sulfur carrier protein ThiS, forming ThiS-thiocarboxylate. This is a step in the synthesis of thiazole, in the thiamine biosynthesis pathway. The sulfur is donated as persulfide by IscS.</text>
</comment>
<comment type="catalytic activity">
    <reaction evidence="1">
        <text>[ThiI sulfur-carrier protein]-S-sulfanyl-L-cysteine + a uridine in tRNA + 2 reduced [2Fe-2S]-[ferredoxin] + ATP + H(+) = [ThiI sulfur-carrier protein]-L-cysteine + a 4-thiouridine in tRNA + 2 oxidized [2Fe-2S]-[ferredoxin] + AMP + diphosphate</text>
        <dbReference type="Rhea" id="RHEA:24176"/>
        <dbReference type="Rhea" id="RHEA-COMP:10000"/>
        <dbReference type="Rhea" id="RHEA-COMP:10001"/>
        <dbReference type="Rhea" id="RHEA-COMP:13337"/>
        <dbReference type="Rhea" id="RHEA-COMP:13338"/>
        <dbReference type="Rhea" id="RHEA-COMP:13339"/>
        <dbReference type="Rhea" id="RHEA-COMP:13340"/>
        <dbReference type="ChEBI" id="CHEBI:15378"/>
        <dbReference type="ChEBI" id="CHEBI:29950"/>
        <dbReference type="ChEBI" id="CHEBI:30616"/>
        <dbReference type="ChEBI" id="CHEBI:33019"/>
        <dbReference type="ChEBI" id="CHEBI:33737"/>
        <dbReference type="ChEBI" id="CHEBI:33738"/>
        <dbReference type="ChEBI" id="CHEBI:61963"/>
        <dbReference type="ChEBI" id="CHEBI:65315"/>
        <dbReference type="ChEBI" id="CHEBI:136798"/>
        <dbReference type="ChEBI" id="CHEBI:456215"/>
        <dbReference type="EC" id="2.8.1.4"/>
    </reaction>
</comment>
<comment type="catalytic activity">
    <reaction evidence="1">
        <text>[ThiS sulfur-carrier protein]-C-terminal Gly-Gly-AMP + S-sulfanyl-L-cysteinyl-[cysteine desulfurase] + AH2 = [ThiS sulfur-carrier protein]-C-terminal-Gly-aminoethanethioate + L-cysteinyl-[cysteine desulfurase] + A + AMP + 2 H(+)</text>
        <dbReference type="Rhea" id="RHEA:43340"/>
        <dbReference type="Rhea" id="RHEA-COMP:12157"/>
        <dbReference type="Rhea" id="RHEA-COMP:12158"/>
        <dbReference type="Rhea" id="RHEA-COMP:12910"/>
        <dbReference type="Rhea" id="RHEA-COMP:19908"/>
        <dbReference type="ChEBI" id="CHEBI:13193"/>
        <dbReference type="ChEBI" id="CHEBI:15378"/>
        <dbReference type="ChEBI" id="CHEBI:17499"/>
        <dbReference type="ChEBI" id="CHEBI:29950"/>
        <dbReference type="ChEBI" id="CHEBI:61963"/>
        <dbReference type="ChEBI" id="CHEBI:90618"/>
        <dbReference type="ChEBI" id="CHEBI:232372"/>
        <dbReference type="ChEBI" id="CHEBI:456215"/>
    </reaction>
</comment>
<comment type="pathway">
    <text evidence="1">Cofactor biosynthesis; thiamine diphosphate biosynthesis.</text>
</comment>
<comment type="subcellular location">
    <subcellularLocation>
        <location evidence="1">Cytoplasm</location>
    </subcellularLocation>
</comment>
<comment type="similarity">
    <text evidence="1">Belongs to the ThiI family.</text>
</comment>
<sequence>MKFIVKLYPEIMMKSKPVRMRFTKMLETNIRNVLKKVDEDAKVQRQWDRIMVMVPKHKPELAQAFGERLACIPGIAHVVQVDEYSFESVDDIYQQALPVYRDQIAGKTFCVRVKRTGDHDFNSIDVERYVGGGLNQFTDAIGVRLKNPDVTVNLEIDRDKLYMVTKRIEGLGGFPMATQEDVLSLISGGFDSGVSSYQFIKKGARTHYCFFNLGGAQHEIGVKQVAYHLWKTYGESHKVKFVSVPFEPVVAEILEKIDNGQMGVVLKRMMMRTAARIAERLGIQALVTGESLGQVSSQTLTNLNVIDRCTELLILRPLIAMDKQDIINESRRIGTEDFAKSMPEYCGVISQKPTVKAVLAKVEAEEKKFSEDLIDQIVAQAVTIDIREIAEQMDTRITETETVIAIETNEVVIDIRAPEEEEHKPLNIEGVEVKRIPFFKLATQFADLDKQKTYLLYCERGVMSKLQALYLIEQGYTNVKVYRP</sequence>
<proteinExistence type="inferred from homology"/>
<evidence type="ECO:0000255" key="1">
    <source>
        <dbReference type="HAMAP-Rule" id="MF_00021"/>
    </source>
</evidence>
<protein>
    <recommendedName>
        <fullName evidence="1">tRNA sulfurtransferase</fullName>
        <ecNumber evidence="1">2.8.1.4</ecNumber>
    </recommendedName>
    <alternativeName>
        <fullName evidence="1">Sulfur carrier protein ThiS sulfurtransferase</fullName>
    </alternativeName>
    <alternativeName>
        <fullName evidence="1">Thiamine biosynthesis protein ThiI</fullName>
    </alternativeName>
    <alternativeName>
        <fullName evidence="1">tRNA 4-thiouridine synthase</fullName>
    </alternativeName>
</protein>
<gene>
    <name evidence="1" type="primary">thiI</name>
    <name type="ordered locus">Sputw3181_2826</name>
</gene>
<accession>A1RLU8</accession>
<name>THII_SHESW</name>
<reference key="1">
    <citation type="submission" date="2006-12" db="EMBL/GenBank/DDBJ databases">
        <title>Complete sequence of Shewanella sp. W3-18-1.</title>
        <authorList>
            <consortium name="US DOE Joint Genome Institute"/>
            <person name="Copeland A."/>
            <person name="Lucas S."/>
            <person name="Lapidus A."/>
            <person name="Barry K."/>
            <person name="Detter J.C."/>
            <person name="Glavina del Rio T."/>
            <person name="Hammon N."/>
            <person name="Israni S."/>
            <person name="Dalin E."/>
            <person name="Tice H."/>
            <person name="Pitluck S."/>
            <person name="Chain P."/>
            <person name="Malfatti S."/>
            <person name="Shin M."/>
            <person name="Vergez L."/>
            <person name="Schmutz J."/>
            <person name="Larimer F."/>
            <person name="Land M."/>
            <person name="Hauser L."/>
            <person name="Kyrpides N."/>
            <person name="Lykidis A."/>
            <person name="Tiedje J."/>
            <person name="Richardson P."/>
        </authorList>
    </citation>
    <scope>NUCLEOTIDE SEQUENCE [LARGE SCALE GENOMIC DNA]</scope>
    <source>
        <strain>W3-18-1</strain>
    </source>
</reference>